<proteinExistence type="inferred from homology"/>
<name>MNMA_STAHJ</name>
<keyword id="KW-0067">ATP-binding</keyword>
<keyword id="KW-0963">Cytoplasm</keyword>
<keyword id="KW-1015">Disulfide bond</keyword>
<keyword id="KW-0547">Nucleotide-binding</keyword>
<keyword id="KW-0694">RNA-binding</keyword>
<keyword id="KW-0808">Transferase</keyword>
<keyword id="KW-0819">tRNA processing</keyword>
<keyword id="KW-0820">tRNA-binding</keyword>
<reference key="1">
    <citation type="journal article" date="2005" name="J. Bacteriol.">
        <title>Whole-genome sequencing of Staphylococcus haemolyticus uncovers the extreme plasticity of its genome and the evolution of human-colonizing staphylococcal species.</title>
        <authorList>
            <person name="Takeuchi F."/>
            <person name="Watanabe S."/>
            <person name="Baba T."/>
            <person name="Yuzawa H."/>
            <person name="Ito T."/>
            <person name="Morimoto Y."/>
            <person name="Kuroda M."/>
            <person name="Cui L."/>
            <person name="Takahashi M."/>
            <person name="Ankai A."/>
            <person name="Baba S."/>
            <person name="Fukui S."/>
            <person name="Lee J.C."/>
            <person name="Hiramatsu K."/>
        </authorList>
    </citation>
    <scope>NUCLEOTIDE SEQUENCE [LARGE SCALE GENOMIC DNA]</scope>
    <source>
        <strain>JCSC1435</strain>
    </source>
</reference>
<organism>
    <name type="scientific">Staphylococcus haemolyticus (strain JCSC1435)</name>
    <dbReference type="NCBI Taxonomy" id="279808"/>
    <lineage>
        <taxon>Bacteria</taxon>
        <taxon>Bacillati</taxon>
        <taxon>Bacillota</taxon>
        <taxon>Bacilli</taxon>
        <taxon>Bacillales</taxon>
        <taxon>Staphylococcaceae</taxon>
        <taxon>Staphylococcus</taxon>
    </lineage>
</organism>
<feature type="chain" id="PRO_1000009582" description="tRNA-specific 2-thiouridylase MnmA">
    <location>
        <begin position="1"/>
        <end position="370"/>
    </location>
</feature>
<feature type="region of interest" description="Interaction with target base in tRNA" evidence="1">
    <location>
        <begin position="97"/>
        <end position="99"/>
    </location>
</feature>
<feature type="region of interest" description="Interaction with tRNA" evidence="1">
    <location>
        <begin position="149"/>
        <end position="151"/>
    </location>
</feature>
<feature type="region of interest" description="Interaction with tRNA" evidence="1">
    <location>
        <begin position="307"/>
        <end position="308"/>
    </location>
</feature>
<feature type="active site" description="Nucleophile" evidence="1">
    <location>
        <position position="102"/>
    </location>
</feature>
<feature type="active site" description="Cysteine persulfide intermediate" evidence="1">
    <location>
        <position position="199"/>
    </location>
</feature>
<feature type="binding site" evidence="1">
    <location>
        <begin position="11"/>
        <end position="18"/>
    </location>
    <ligand>
        <name>ATP</name>
        <dbReference type="ChEBI" id="CHEBI:30616"/>
    </ligand>
</feature>
<feature type="binding site" evidence="1">
    <location>
        <position position="37"/>
    </location>
    <ligand>
        <name>ATP</name>
        <dbReference type="ChEBI" id="CHEBI:30616"/>
    </ligand>
</feature>
<feature type="binding site" evidence="1">
    <location>
        <position position="126"/>
    </location>
    <ligand>
        <name>ATP</name>
        <dbReference type="ChEBI" id="CHEBI:30616"/>
    </ligand>
</feature>
<feature type="site" description="Interaction with tRNA" evidence="1">
    <location>
        <position position="127"/>
    </location>
</feature>
<feature type="site" description="Interaction with tRNA" evidence="1">
    <location>
        <position position="340"/>
    </location>
</feature>
<feature type="disulfide bond" description="Alternate" evidence="1">
    <location>
        <begin position="102"/>
        <end position="199"/>
    </location>
</feature>
<protein>
    <recommendedName>
        <fullName evidence="1">tRNA-specific 2-thiouridylase MnmA</fullName>
        <ecNumber evidence="1">2.8.1.13</ecNumber>
    </recommendedName>
</protein>
<sequence>MSNKDIRVVVGMSGGVDSSVTAHVLKDQGYDVIGIFMKNWDDTDENGVCTATEDYNDVIAVCNQIGIPYYAVNFEQEYWDKVFTYFLDEYKKGRTPNPDVMCNKEIKFKAFLEHALKLGADYVATGHYARIRRHDDGHVEMLRGVDNNKDQTYFLNQLSQQQLSKVMFPIGDIDKKEVRKIAEEQDLATAKKKDSTGICFIGERNFKTFLSQYLPAQSGEMRTLNGDKMGMHSGLMYYTIGQRHGLGIGGDGDPWFVVGKNLEDNILYVEQGFHHDALYSDYLIASDFSFVNPVDLDNGFECTAKFRYRQKDTKVFVQRESQNALRVTFDEPVRAITPGQAVVFYDEEVCLGGATIDDVFKTTGQLSYVV</sequence>
<gene>
    <name evidence="1" type="primary">mnmA</name>
    <name type="synonym">trmU</name>
    <name type="ordered locus">SH1298</name>
</gene>
<evidence type="ECO:0000255" key="1">
    <source>
        <dbReference type="HAMAP-Rule" id="MF_00144"/>
    </source>
</evidence>
<accession>Q4L6W8</accession>
<dbReference type="EC" id="2.8.1.13" evidence="1"/>
<dbReference type="EMBL" id="AP006716">
    <property type="protein sequence ID" value="BAE04607.1"/>
    <property type="molecule type" value="Genomic_DNA"/>
</dbReference>
<dbReference type="RefSeq" id="WP_011275596.1">
    <property type="nucleotide sequence ID" value="NC_007168.1"/>
</dbReference>
<dbReference type="SMR" id="Q4L6W8"/>
<dbReference type="GeneID" id="93780700"/>
<dbReference type="KEGG" id="sha:SH1298"/>
<dbReference type="eggNOG" id="COG0482">
    <property type="taxonomic scope" value="Bacteria"/>
</dbReference>
<dbReference type="HOGENOM" id="CLU_035188_1_0_9"/>
<dbReference type="OrthoDB" id="9800696at2"/>
<dbReference type="Proteomes" id="UP000000543">
    <property type="component" value="Chromosome"/>
</dbReference>
<dbReference type="GO" id="GO:0005737">
    <property type="term" value="C:cytoplasm"/>
    <property type="evidence" value="ECO:0007669"/>
    <property type="project" value="UniProtKB-SubCell"/>
</dbReference>
<dbReference type="GO" id="GO:0005524">
    <property type="term" value="F:ATP binding"/>
    <property type="evidence" value="ECO:0007669"/>
    <property type="project" value="UniProtKB-KW"/>
</dbReference>
<dbReference type="GO" id="GO:0000049">
    <property type="term" value="F:tRNA binding"/>
    <property type="evidence" value="ECO:0007669"/>
    <property type="project" value="UniProtKB-KW"/>
</dbReference>
<dbReference type="GO" id="GO:0103016">
    <property type="term" value="F:tRNA-uridine 2-sulfurtransferase activity"/>
    <property type="evidence" value="ECO:0007669"/>
    <property type="project" value="UniProtKB-EC"/>
</dbReference>
<dbReference type="GO" id="GO:0002143">
    <property type="term" value="P:tRNA wobble position uridine thiolation"/>
    <property type="evidence" value="ECO:0007669"/>
    <property type="project" value="TreeGrafter"/>
</dbReference>
<dbReference type="CDD" id="cd01998">
    <property type="entry name" value="MnmA_TRMU-like"/>
    <property type="match status" value="1"/>
</dbReference>
<dbReference type="FunFam" id="2.30.30.280:FF:000001">
    <property type="entry name" value="tRNA-specific 2-thiouridylase MnmA"/>
    <property type="match status" value="1"/>
</dbReference>
<dbReference type="FunFam" id="2.40.30.10:FF:000023">
    <property type="entry name" value="tRNA-specific 2-thiouridylase MnmA"/>
    <property type="match status" value="1"/>
</dbReference>
<dbReference type="FunFam" id="3.40.50.620:FF:000004">
    <property type="entry name" value="tRNA-specific 2-thiouridylase MnmA"/>
    <property type="match status" value="1"/>
</dbReference>
<dbReference type="Gene3D" id="2.30.30.280">
    <property type="entry name" value="Adenine nucleotide alpha hydrolases-like domains"/>
    <property type="match status" value="1"/>
</dbReference>
<dbReference type="Gene3D" id="3.40.50.620">
    <property type="entry name" value="HUPs"/>
    <property type="match status" value="1"/>
</dbReference>
<dbReference type="Gene3D" id="2.40.30.10">
    <property type="entry name" value="Translation factors"/>
    <property type="match status" value="1"/>
</dbReference>
<dbReference type="HAMAP" id="MF_00144">
    <property type="entry name" value="tRNA_thiouridyl_MnmA"/>
    <property type="match status" value="1"/>
</dbReference>
<dbReference type="InterPro" id="IPR004506">
    <property type="entry name" value="MnmA-like"/>
</dbReference>
<dbReference type="InterPro" id="IPR046885">
    <property type="entry name" value="MnmA-like_C"/>
</dbReference>
<dbReference type="InterPro" id="IPR046884">
    <property type="entry name" value="MnmA-like_central"/>
</dbReference>
<dbReference type="InterPro" id="IPR023382">
    <property type="entry name" value="MnmA-like_central_sf"/>
</dbReference>
<dbReference type="InterPro" id="IPR014729">
    <property type="entry name" value="Rossmann-like_a/b/a_fold"/>
</dbReference>
<dbReference type="NCBIfam" id="NF001138">
    <property type="entry name" value="PRK00143.1"/>
    <property type="match status" value="1"/>
</dbReference>
<dbReference type="NCBIfam" id="TIGR00420">
    <property type="entry name" value="trmU"/>
    <property type="match status" value="1"/>
</dbReference>
<dbReference type="PANTHER" id="PTHR11933:SF5">
    <property type="entry name" value="MITOCHONDRIAL TRNA-SPECIFIC 2-THIOURIDYLASE 1"/>
    <property type="match status" value="1"/>
</dbReference>
<dbReference type="PANTHER" id="PTHR11933">
    <property type="entry name" value="TRNA 5-METHYLAMINOMETHYL-2-THIOURIDYLATE -METHYLTRANSFERASE"/>
    <property type="match status" value="1"/>
</dbReference>
<dbReference type="Pfam" id="PF03054">
    <property type="entry name" value="tRNA_Me_trans"/>
    <property type="match status" value="1"/>
</dbReference>
<dbReference type="Pfam" id="PF20258">
    <property type="entry name" value="tRNA_Me_trans_C"/>
    <property type="match status" value="1"/>
</dbReference>
<dbReference type="Pfam" id="PF20259">
    <property type="entry name" value="tRNA_Me_trans_M"/>
    <property type="match status" value="1"/>
</dbReference>
<dbReference type="SUPFAM" id="SSF52402">
    <property type="entry name" value="Adenine nucleotide alpha hydrolases-like"/>
    <property type="match status" value="1"/>
</dbReference>
<comment type="function">
    <text evidence="1">Catalyzes the 2-thiolation of uridine at the wobble position (U34) of tRNA, leading to the formation of s(2)U34.</text>
</comment>
<comment type="catalytic activity">
    <reaction evidence="1">
        <text>S-sulfanyl-L-cysteinyl-[protein] + uridine(34) in tRNA + AH2 + ATP = 2-thiouridine(34) in tRNA + L-cysteinyl-[protein] + A + AMP + diphosphate + H(+)</text>
        <dbReference type="Rhea" id="RHEA:47032"/>
        <dbReference type="Rhea" id="RHEA-COMP:10131"/>
        <dbReference type="Rhea" id="RHEA-COMP:11726"/>
        <dbReference type="Rhea" id="RHEA-COMP:11727"/>
        <dbReference type="Rhea" id="RHEA-COMP:11728"/>
        <dbReference type="ChEBI" id="CHEBI:13193"/>
        <dbReference type="ChEBI" id="CHEBI:15378"/>
        <dbReference type="ChEBI" id="CHEBI:17499"/>
        <dbReference type="ChEBI" id="CHEBI:29950"/>
        <dbReference type="ChEBI" id="CHEBI:30616"/>
        <dbReference type="ChEBI" id="CHEBI:33019"/>
        <dbReference type="ChEBI" id="CHEBI:61963"/>
        <dbReference type="ChEBI" id="CHEBI:65315"/>
        <dbReference type="ChEBI" id="CHEBI:87170"/>
        <dbReference type="ChEBI" id="CHEBI:456215"/>
        <dbReference type="EC" id="2.8.1.13"/>
    </reaction>
</comment>
<comment type="subcellular location">
    <subcellularLocation>
        <location evidence="1">Cytoplasm</location>
    </subcellularLocation>
</comment>
<comment type="similarity">
    <text evidence="1">Belongs to the MnmA/TRMU family.</text>
</comment>